<protein>
    <recommendedName>
        <fullName>Epididymal-specific lipocalin-10</fullName>
    </recommendedName>
</protein>
<evidence type="ECO:0000250" key="1"/>
<evidence type="ECO:0000250" key="2">
    <source>
        <dbReference type="UniProtKB" id="Q6JVE6"/>
    </source>
</evidence>
<evidence type="ECO:0000255" key="3"/>
<evidence type="ECO:0000269" key="4">
    <source>
    </source>
</evidence>
<evidence type="ECO:0000305" key="5"/>
<organism>
    <name type="scientific">Mus musculus</name>
    <name type="common">Mouse</name>
    <dbReference type="NCBI Taxonomy" id="10090"/>
    <lineage>
        <taxon>Eukaryota</taxon>
        <taxon>Metazoa</taxon>
        <taxon>Chordata</taxon>
        <taxon>Craniata</taxon>
        <taxon>Vertebrata</taxon>
        <taxon>Euteleostomi</taxon>
        <taxon>Mammalia</taxon>
        <taxon>Eutheria</taxon>
        <taxon>Euarchontoglires</taxon>
        <taxon>Glires</taxon>
        <taxon>Rodentia</taxon>
        <taxon>Myomorpha</taxon>
        <taxon>Muroidea</taxon>
        <taxon>Muridae</taxon>
        <taxon>Murinae</taxon>
        <taxon>Mus</taxon>
        <taxon>Mus</taxon>
    </lineage>
</organism>
<dbReference type="EMBL" id="AF435737">
    <property type="protein sequence ID" value="AAO84436.1"/>
    <property type="molecule type" value="mRNA"/>
</dbReference>
<dbReference type="CCDS" id="CCDS15787.1"/>
<dbReference type="RefSeq" id="NP_828875.1">
    <property type="nucleotide sequence ID" value="NM_178036.4"/>
</dbReference>
<dbReference type="SMR" id="Q810Z1"/>
<dbReference type="STRING" id="10090.ENSMUSP00000059353"/>
<dbReference type="GlyCosmos" id="Q810Z1">
    <property type="glycosylation" value="2 sites, No reported glycans"/>
</dbReference>
<dbReference type="GlyGen" id="Q810Z1">
    <property type="glycosylation" value="2 sites"/>
</dbReference>
<dbReference type="PaxDb" id="10090-ENSMUSP00000059353"/>
<dbReference type="ProteomicsDB" id="286180"/>
<dbReference type="Antibodypedia" id="53298">
    <property type="antibodies" value="55 antibodies from 14 providers"/>
</dbReference>
<dbReference type="DNASU" id="332578"/>
<dbReference type="Ensembl" id="ENSMUST00000058912.3">
    <property type="protein sequence ID" value="ENSMUSP00000059353.3"/>
    <property type="gene ID" value="ENSMUSG00000047356.3"/>
</dbReference>
<dbReference type="GeneID" id="332578"/>
<dbReference type="KEGG" id="mmu:332578"/>
<dbReference type="UCSC" id="uc008ite.2">
    <property type="organism name" value="mouse"/>
</dbReference>
<dbReference type="AGR" id="MGI:1925000"/>
<dbReference type="CTD" id="414332"/>
<dbReference type="MGI" id="MGI:1925000">
    <property type="gene designation" value="Lcn10"/>
</dbReference>
<dbReference type="VEuPathDB" id="HostDB:ENSMUSG00000047356"/>
<dbReference type="eggNOG" id="ENOG502TF09">
    <property type="taxonomic scope" value="Eukaryota"/>
</dbReference>
<dbReference type="GeneTree" id="ENSGT01050000244868"/>
<dbReference type="HOGENOM" id="CLU_130468_0_0_1"/>
<dbReference type="InParanoid" id="Q810Z1"/>
<dbReference type="OMA" id="SWTQEFF"/>
<dbReference type="OrthoDB" id="9834950at2759"/>
<dbReference type="PhylomeDB" id="Q810Z1"/>
<dbReference type="TreeFam" id="TF336103"/>
<dbReference type="BioGRID-ORCS" id="332578">
    <property type="hits" value="2 hits in 76 CRISPR screens"/>
</dbReference>
<dbReference type="PRO" id="PR:Q810Z1"/>
<dbReference type="Proteomes" id="UP000000589">
    <property type="component" value="Chromosome 2"/>
</dbReference>
<dbReference type="RNAct" id="Q810Z1">
    <property type="molecule type" value="protein"/>
</dbReference>
<dbReference type="Bgee" id="ENSMUSG00000047356">
    <property type="expression patterns" value="Expressed in embryonic cell in blastocyst and 1 other cell type or tissue"/>
</dbReference>
<dbReference type="ExpressionAtlas" id="Q810Z1">
    <property type="expression patterns" value="baseline and differential"/>
</dbReference>
<dbReference type="GO" id="GO:0005576">
    <property type="term" value="C:extracellular region"/>
    <property type="evidence" value="ECO:0007669"/>
    <property type="project" value="UniProtKB-SubCell"/>
</dbReference>
<dbReference type="GO" id="GO:0036094">
    <property type="term" value="F:small molecule binding"/>
    <property type="evidence" value="ECO:0007669"/>
    <property type="project" value="InterPro"/>
</dbReference>
<dbReference type="GO" id="GO:0007507">
    <property type="term" value="P:heart development"/>
    <property type="evidence" value="ECO:0000315"/>
    <property type="project" value="MGI"/>
</dbReference>
<dbReference type="GO" id="GO:0006954">
    <property type="term" value="P:inflammatory response"/>
    <property type="evidence" value="ECO:0000315"/>
    <property type="project" value="MGI"/>
</dbReference>
<dbReference type="GO" id="GO:0042116">
    <property type="term" value="P:macrophage activation"/>
    <property type="evidence" value="ECO:0000315"/>
    <property type="project" value="MGI"/>
</dbReference>
<dbReference type="GO" id="GO:0032496">
    <property type="term" value="P:response to lipopolysaccharide"/>
    <property type="evidence" value="ECO:0000315"/>
    <property type="project" value="MGI"/>
</dbReference>
<dbReference type="GO" id="GO:0006950">
    <property type="term" value="P:response to stress"/>
    <property type="evidence" value="ECO:0000315"/>
    <property type="project" value="MGI"/>
</dbReference>
<dbReference type="GO" id="GO:0034341">
    <property type="term" value="P:response to type II interferon"/>
    <property type="evidence" value="ECO:0000315"/>
    <property type="project" value="MGI"/>
</dbReference>
<dbReference type="GO" id="GO:0010165">
    <property type="term" value="P:response to X-ray"/>
    <property type="evidence" value="ECO:0000315"/>
    <property type="project" value="MGI"/>
</dbReference>
<dbReference type="CDD" id="cd19425">
    <property type="entry name" value="lipocalin_10-like"/>
    <property type="match status" value="1"/>
</dbReference>
<dbReference type="Gene3D" id="2.40.128.20">
    <property type="match status" value="1"/>
</dbReference>
<dbReference type="InterPro" id="IPR012674">
    <property type="entry name" value="Calycin"/>
</dbReference>
<dbReference type="InterPro" id="IPR002345">
    <property type="entry name" value="Lipocalin"/>
</dbReference>
<dbReference type="InterPro" id="IPR022272">
    <property type="entry name" value="Lipocalin_CS"/>
</dbReference>
<dbReference type="InterPro" id="IPR000566">
    <property type="entry name" value="Lipocln_cytosolic_FA-bd_dom"/>
</dbReference>
<dbReference type="PANTHER" id="PTHR11430:SF79">
    <property type="entry name" value="EPIDIDYMAL-SPECIFIC LIPOCALIN-10"/>
    <property type="match status" value="1"/>
</dbReference>
<dbReference type="PANTHER" id="PTHR11430">
    <property type="entry name" value="LIPOCALIN"/>
    <property type="match status" value="1"/>
</dbReference>
<dbReference type="Pfam" id="PF00061">
    <property type="entry name" value="Lipocalin"/>
    <property type="match status" value="1"/>
</dbReference>
<dbReference type="SUPFAM" id="SSF50814">
    <property type="entry name" value="Lipocalins"/>
    <property type="match status" value="1"/>
</dbReference>
<dbReference type="PROSITE" id="PS00213">
    <property type="entry name" value="LIPOCALIN"/>
    <property type="match status" value="1"/>
</dbReference>
<feature type="signal peptide" evidence="3">
    <location>
        <begin position="1"/>
        <end position="19"/>
    </location>
</feature>
<feature type="chain" id="PRO_0000017921" description="Epididymal-specific lipocalin-10">
    <location>
        <begin position="20"/>
        <end position="182"/>
    </location>
</feature>
<feature type="modified residue" description="N6-acetyllysine" evidence="2">
    <location>
        <position position="165"/>
    </location>
</feature>
<feature type="glycosylation site" description="N-linked (GlcNAc...) asparagine" evidence="3">
    <location>
        <position position="31"/>
    </location>
</feature>
<feature type="glycosylation site" description="N-linked (GlcNAc...) asparagine" evidence="3">
    <location>
        <position position="144"/>
    </location>
</feature>
<feature type="disulfide bond" evidence="1">
    <location>
        <begin position="85"/>
        <end position="176"/>
    </location>
</feature>
<accession>Q810Z1</accession>
<sequence length="182" mass="20652">MKLEMALSIALALAVVSWTQEFFPKEAQTLNWSKFSGFWYIIAIATDTQGFLPARDKRKLGASVVKVHKTGQLRVVIAFSRPRGCQSREVTLKKDRKRPVFRNTLKGVKGFHVLSTDYTYGLVYLRLGRGGSNYKSLLLFNRQNISSFLSLREFLDTCHILQLTKQATILPKDDSCAHTILP</sequence>
<keyword id="KW-0007">Acetylation</keyword>
<keyword id="KW-1015">Disulfide bond</keyword>
<keyword id="KW-0325">Glycoprotein</keyword>
<keyword id="KW-1185">Reference proteome</keyword>
<keyword id="KW-0964">Secreted</keyword>
<keyword id="KW-0732">Signal</keyword>
<keyword id="KW-0813">Transport</keyword>
<name>LCN10_MOUSE</name>
<gene>
    <name type="primary">Lcn10</name>
</gene>
<comment type="function">
    <text>May play a role in male fertility. May act as a retinoid carrier protein within the epididymis.</text>
</comment>
<comment type="subcellular location">
    <subcellularLocation>
        <location evidence="1">Secreted</location>
    </subcellularLocation>
</comment>
<comment type="tissue specificity">
    <text evidence="4">Expressed in epididymis.</text>
</comment>
<comment type="similarity">
    <text evidence="5">Belongs to the calycin superfamily. Lipocalin family.</text>
</comment>
<reference key="1">
    <citation type="journal article" date="2004" name="Gene">
        <title>Molecular evolution of epididymal lipocalin genes localized on mouse chromosome 2.</title>
        <authorList>
            <person name="Suzuki K."/>
            <person name="Lareyre J.-J."/>
            <person name="Sanchez D."/>
            <person name="Gutierrez G."/>
            <person name="Araki Y."/>
            <person name="Matusik R.J."/>
            <person name="Orgebin-Crist M.-C."/>
        </authorList>
    </citation>
    <scope>NUCLEOTIDE SEQUENCE [MRNA]</scope>
    <scope>TISSUE SPECIFICITY</scope>
    <source>
        <strain>C57BL/6 X DBA/2</strain>
        <tissue>Epididymis</tissue>
    </source>
</reference>
<proteinExistence type="evidence at transcript level"/>